<protein>
    <recommendedName>
        <fullName evidence="2">Small ribosomal subunit protein uS4c</fullName>
    </recommendedName>
    <alternativeName>
        <fullName>30S ribosomal protein S4, chloroplastic</fullName>
    </alternativeName>
</protein>
<accession>O20273</accession>
<name>RR4_PATFR</name>
<evidence type="ECO:0000250" key="1"/>
<evidence type="ECO:0000305" key="2"/>
<proteinExistence type="inferred from homology"/>
<comment type="function">
    <text evidence="1">One of the primary rRNA binding proteins, it binds directly to 16S rRNA where it nucleates assembly of the body of the 30S subunit.</text>
</comment>
<comment type="function">
    <text evidence="1">With S5 and S12 plays an important role in translational accuracy.</text>
</comment>
<comment type="subunit">
    <text evidence="1">Part of the 30S ribosomal subunit. Contacts protein S5. The interaction surface between S4 and S5 is involved in control of translational fidelity (By similarity).</text>
</comment>
<comment type="subcellular location">
    <subcellularLocation>
        <location>Plastid</location>
        <location>Chloroplast</location>
    </subcellularLocation>
</comment>
<comment type="similarity">
    <text evidence="2">Belongs to the universal ribosomal protein uS4 family.</text>
</comment>
<reference key="1">
    <citation type="journal article" date="1997" name="Plant Syst. Evol.">
        <title>Phylogenetic analysis of Iridaceae with parsimony and distance methods using the plastid gene rps4.</title>
        <authorList>
            <person name="Souza-Chies T.T."/>
            <person name="Bittar G."/>
            <person name="Nadot S."/>
            <person name="Carter L."/>
            <person name="Besin E."/>
            <person name="Lejeune B.P."/>
        </authorList>
    </citation>
    <scope>NUCLEOTIDE SEQUENCE [GENOMIC DNA]</scope>
</reference>
<sequence length="184" mass="21276">RFKKIRRLGALPGLTSKRPRSGNDLKNQLRSVKRSQYRIRLEEKQKLRFHYGLTERQLLKYVHIAGKVKGSTGQVLLQLLEMRLDNILFRLGMASTIPGARQLVNHRHILVNGRIVDIPSYRCKPQDIITTKDKQRSKALIQNYIASSTQPQEELPNHLTIDAFQYKGLVNQIIDSKWIGLKIN</sequence>
<feature type="chain" id="PRO_0000132644" description="Small ribosomal subunit protein uS4c">
    <location>
        <begin position="1" status="less than"/>
        <end position="184" status="greater than"/>
    </location>
</feature>
<feature type="domain" description="S4 RNA-binding">
    <location>
        <begin position="82"/>
        <end position="143"/>
    </location>
</feature>
<feature type="non-terminal residue">
    <location>
        <position position="1"/>
    </location>
</feature>
<feature type="non-terminal residue">
    <location>
        <position position="184"/>
    </location>
</feature>
<organism>
    <name type="scientific">Patersonia fragilis</name>
    <name type="common">Short purple-flag</name>
    <dbReference type="NCBI Taxonomy" id="58968"/>
    <lineage>
        <taxon>Eukaryota</taxon>
        <taxon>Viridiplantae</taxon>
        <taxon>Streptophyta</taxon>
        <taxon>Embryophyta</taxon>
        <taxon>Tracheophyta</taxon>
        <taxon>Spermatophyta</taxon>
        <taxon>Magnoliopsida</taxon>
        <taxon>Liliopsida</taxon>
        <taxon>Asparagales</taxon>
        <taxon>Iridaceae</taxon>
        <taxon>Patersonioideae</taxon>
        <taxon>Patersonia</taxon>
    </lineage>
</organism>
<keyword id="KW-0150">Chloroplast</keyword>
<keyword id="KW-0934">Plastid</keyword>
<keyword id="KW-0687">Ribonucleoprotein</keyword>
<keyword id="KW-0689">Ribosomal protein</keyword>
<keyword id="KW-0694">RNA-binding</keyword>
<keyword id="KW-0699">rRNA-binding</keyword>
<geneLocation type="chloroplast"/>
<dbReference type="EMBL" id="Z68248">
    <property type="protein sequence ID" value="CAA92546.1"/>
    <property type="molecule type" value="Genomic_DNA"/>
</dbReference>
<dbReference type="SMR" id="O20273"/>
<dbReference type="GO" id="GO:0009507">
    <property type="term" value="C:chloroplast"/>
    <property type="evidence" value="ECO:0007669"/>
    <property type="project" value="UniProtKB-SubCell"/>
</dbReference>
<dbReference type="GO" id="GO:0015935">
    <property type="term" value="C:small ribosomal subunit"/>
    <property type="evidence" value="ECO:0007669"/>
    <property type="project" value="InterPro"/>
</dbReference>
<dbReference type="GO" id="GO:0019843">
    <property type="term" value="F:rRNA binding"/>
    <property type="evidence" value="ECO:0007669"/>
    <property type="project" value="UniProtKB-KW"/>
</dbReference>
<dbReference type="GO" id="GO:0003735">
    <property type="term" value="F:structural constituent of ribosome"/>
    <property type="evidence" value="ECO:0007669"/>
    <property type="project" value="InterPro"/>
</dbReference>
<dbReference type="GO" id="GO:0042274">
    <property type="term" value="P:ribosomal small subunit biogenesis"/>
    <property type="evidence" value="ECO:0007669"/>
    <property type="project" value="TreeGrafter"/>
</dbReference>
<dbReference type="GO" id="GO:0006412">
    <property type="term" value="P:translation"/>
    <property type="evidence" value="ECO:0007669"/>
    <property type="project" value="InterPro"/>
</dbReference>
<dbReference type="CDD" id="cd00165">
    <property type="entry name" value="S4"/>
    <property type="match status" value="1"/>
</dbReference>
<dbReference type="FunFam" id="1.10.1050.10:FF:000002">
    <property type="entry name" value="30S ribosomal protein S4, chloroplastic"/>
    <property type="match status" value="1"/>
</dbReference>
<dbReference type="FunFam" id="3.10.290.10:FF:000081">
    <property type="entry name" value="30S ribosomal protein S4, chloroplastic"/>
    <property type="match status" value="1"/>
</dbReference>
<dbReference type="Gene3D" id="1.10.1050.10">
    <property type="entry name" value="Ribosomal Protein S4 Delta 41, Chain A, domain 1"/>
    <property type="match status" value="1"/>
</dbReference>
<dbReference type="Gene3D" id="3.10.290.10">
    <property type="entry name" value="RNA-binding S4 domain"/>
    <property type="match status" value="1"/>
</dbReference>
<dbReference type="HAMAP" id="MF_01306_B">
    <property type="entry name" value="Ribosomal_uS4_B"/>
    <property type="match status" value="1"/>
</dbReference>
<dbReference type="InterPro" id="IPR022801">
    <property type="entry name" value="Ribosomal_uS4"/>
</dbReference>
<dbReference type="InterPro" id="IPR005709">
    <property type="entry name" value="Ribosomal_uS4_bac-type"/>
</dbReference>
<dbReference type="InterPro" id="IPR018079">
    <property type="entry name" value="Ribosomal_uS4_CS"/>
</dbReference>
<dbReference type="InterPro" id="IPR001912">
    <property type="entry name" value="Ribosomal_uS4_N"/>
</dbReference>
<dbReference type="InterPro" id="IPR002942">
    <property type="entry name" value="S4_RNA-bd"/>
</dbReference>
<dbReference type="InterPro" id="IPR036986">
    <property type="entry name" value="S4_RNA-bd_sf"/>
</dbReference>
<dbReference type="NCBIfam" id="NF003717">
    <property type="entry name" value="PRK05327.1"/>
    <property type="match status" value="1"/>
</dbReference>
<dbReference type="NCBIfam" id="TIGR01017">
    <property type="entry name" value="rpsD_bact"/>
    <property type="match status" value="1"/>
</dbReference>
<dbReference type="PANTHER" id="PTHR11831">
    <property type="entry name" value="30S 40S RIBOSOMAL PROTEIN"/>
    <property type="match status" value="1"/>
</dbReference>
<dbReference type="PANTHER" id="PTHR11831:SF4">
    <property type="entry name" value="SMALL RIBOSOMAL SUBUNIT PROTEIN US4M"/>
    <property type="match status" value="1"/>
</dbReference>
<dbReference type="Pfam" id="PF00163">
    <property type="entry name" value="Ribosomal_S4"/>
    <property type="match status" value="1"/>
</dbReference>
<dbReference type="Pfam" id="PF01479">
    <property type="entry name" value="S4"/>
    <property type="match status" value="1"/>
</dbReference>
<dbReference type="SMART" id="SM01390">
    <property type="entry name" value="Ribosomal_S4"/>
    <property type="match status" value="1"/>
</dbReference>
<dbReference type="SMART" id="SM00363">
    <property type="entry name" value="S4"/>
    <property type="match status" value="1"/>
</dbReference>
<dbReference type="SUPFAM" id="SSF55174">
    <property type="entry name" value="Alpha-L RNA-binding motif"/>
    <property type="match status" value="1"/>
</dbReference>
<dbReference type="PROSITE" id="PS00632">
    <property type="entry name" value="RIBOSOMAL_S4"/>
    <property type="match status" value="1"/>
</dbReference>
<dbReference type="PROSITE" id="PS50889">
    <property type="entry name" value="S4"/>
    <property type="match status" value="1"/>
</dbReference>
<gene>
    <name type="primary">rps4</name>
</gene>